<accession>Q9JJN6</accession>
<protein>
    <recommendedName>
        <fullName>Beta-catenin-interacting protein 1</fullName>
    </recommendedName>
    <alternativeName>
        <fullName>Inhibitor of beta-catenin and Tcf-4</fullName>
    </alternativeName>
</protein>
<reference key="1">
    <citation type="journal article" date="2000" name="Genes Dev.">
        <title>Inhibition of Wnt signaling by ICAT, a novel beta-catenin-interacting protein.</title>
        <authorList>
            <person name="Tago K."/>
            <person name="Nakamura T."/>
            <person name="Nishita M."/>
            <person name="Hyodo J."/>
            <person name="Nagai S."/>
            <person name="Murata Y."/>
            <person name="Adachi S."/>
            <person name="Ohwada S."/>
            <person name="Morishita Y."/>
            <person name="Shibuya H."/>
            <person name="Akiyama T."/>
        </authorList>
    </citation>
    <scope>NUCLEOTIDE SEQUENCE [MRNA]</scope>
    <scope>CHARACTERIZATION</scope>
    <scope>MUTAGENESIS OF 37-GLU--GLU-39</scope>
    <source>
        <tissue>Embryo</tissue>
    </source>
</reference>
<reference key="2">
    <citation type="journal article" date="2005" name="Science">
        <title>The transcriptional landscape of the mammalian genome.</title>
        <authorList>
            <person name="Carninci P."/>
            <person name="Kasukawa T."/>
            <person name="Katayama S."/>
            <person name="Gough J."/>
            <person name="Frith M.C."/>
            <person name="Maeda N."/>
            <person name="Oyama R."/>
            <person name="Ravasi T."/>
            <person name="Lenhard B."/>
            <person name="Wells C."/>
            <person name="Kodzius R."/>
            <person name="Shimokawa K."/>
            <person name="Bajic V.B."/>
            <person name="Brenner S.E."/>
            <person name="Batalov S."/>
            <person name="Forrest A.R."/>
            <person name="Zavolan M."/>
            <person name="Davis M.J."/>
            <person name="Wilming L.G."/>
            <person name="Aidinis V."/>
            <person name="Allen J.E."/>
            <person name="Ambesi-Impiombato A."/>
            <person name="Apweiler R."/>
            <person name="Aturaliya R.N."/>
            <person name="Bailey T.L."/>
            <person name="Bansal M."/>
            <person name="Baxter L."/>
            <person name="Beisel K.W."/>
            <person name="Bersano T."/>
            <person name="Bono H."/>
            <person name="Chalk A.M."/>
            <person name="Chiu K.P."/>
            <person name="Choudhary V."/>
            <person name="Christoffels A."/>
            <person name="Clutterbuck D.R."/>
            <person name="Crowe M.L."/>
            <person name="Dalla E."/>
            <person name="Dalrymple B.P."/>
            <person name="de Bono B."/>
            <person name="Della Gatta G."/>
            <person name="di Bernardo D."/>
            <person name="Down T."/>
            <person name="Engstrom P."/>
            <person name="Fagiolini M."/>
            <person name="Faulkner G."/>
            <person name="Fletcher C.F."/>
            <person name="Fukushima T."/>
            <person name="Furuno M."/>
            <person name="Futaki S."/>
            <person name="Gariboldi M."/>
            <person name="Georgii-Hemming P."/>
            <person name="Gingeras T.R."/>
            <person name="Gojobori T."/>
            <person name="Green R.E."/>
            <person name="Gustincich S."/>
            <person name="Harbers M."/>
            <person name="Hayashi Y."/>
            <person name="Hensch T.K."/>
            <person name="Hirokawa N."/>
            <person name="Hill D."/>
            <person name="Huminiecki L."/>
            <person name="Iacono M."/>
            <person name="Ikeo K."/>
            <person name="Iwama A."/>
            <person name="Ishikawa T."/>
            <person name="Jakt M."/>
            <person name="Kanapin A."/>
            <person name="Katoh M."/>
            <person name="Kawasawa Y."/>
            <person name="Kelso J."/>
            <person name="Kitamura H."/>
            <person name="Kitano H."/>
            <person name="Kollias G."/>
            <person name="Krishnan S.P."/>
            <person name="Kruger A."/>
            <person name="Kummerfeld S.K."/>
            <person name="Kurochkin I.V."/>
            <person name="Lareau L.F."/>
            <person name="Lazarevic D."/>
            <person name="Lipovich L."/>
            <person name="Liu J."/>
            <person name="Liuni S."/>
            <person name="McWilliam S."/>
            <person name="Madan Babu M."/>
            <person name="Madera M."/>
            <person name="Marchionni L."/>
            <person name="Matsuda H."/>
            <person name="Matsuzawa S."/>
            <person name="Miki H."/>
            <person name="Mignone F."/>
            <person name="Miyake S."/>
            <person name="Morris K."/>
            <person name="Mottagui-Tabar S."/>
            <person name="Mulder N."/>
            <person name="Nakano N."/>
            <person name="Nakauchi H."/>
            <person name="Ng P."/>
            <person name="Nilsson R."/>
            <person name="Nishiguchi S."/>
            <person name="Nishikawa S."/>
            <person name="Nori F."/>
            <person name="Ohara O."/>
            <person name="Okazaki Y."/>
            <person name="Orlando V."/>
            <person name="Pang K.C."/>
            <person name="Pavan W.J."/>
            <person name="Pavesi G."/>
            <person name="Pesole G."/>
            <person name="Petrovsky N."/>
            <person name="Piazza S."/>
            <person name="Reed J."/>
            <person name="Reid J.F."/>
            <person name="Ring B.Z."/>
            <person name="Ringwald M."/>
            <person name="Rost B."/>
            <person name="Ruan Y."/>
            <person name="Salzberg S.L."/>
            <person name="Sandelin A."/>
            <person name="Schneider C."/>
            <person name="Schoenbach C."/>
            <person name="Sekiguchi K."/>
            <person name="Semple C.A."/>
            <person name="Seno S."/>
            <person name="Sessa L."/>
            <person name="Sheng Y."/>
            <person name="Shibata Y."/>
            <person name="Shimada H."/>
            <person name="Shimada K."/>
            <person name="Silva D."/>
            <person name="Sinclair B."/>
            <person name="Sperling S."/>
            <person name="Stupka E."/>
            <person name="Sugiura K."/>
            <person name="Sultana R."/>
            <person name="Takenaka Y."/>
            <person name="Taki K."/>
            <person name="Tammoja K."/>
            <person name="Tan S.L."/>
            <person name="Tang S."/>
            <person name="Taylor M.S."/>
            <person name="Tegner J."/>
            <person name="Teichmann S.A."/>
            <person name="Ueda H.R."/>
            <person name="van Nimwegen E."/>
            <person name="Verardo R."/>
            <person name="Wei C.L."/>
            <person name="Yagi K."/>
            <person name="Yamanishi H."/>
            <person name="Zabarovsky E."/>
            <person name="Zhu S."/>
            <person name="Zimmer A."/>
            <person name="Hide W."/>
            <person name="Bult C."/>
            <person name="Grimmond S.M."/>
            <person name="Teasdale R.D."/>
            <person name="Liu E.T."/>
            <person name="Brusic V."/>
            <person name="Quackenbush J."/>
            <person name="Wahlestedt C."/>
            <person name="Mattick J.S."/>
            <person name="Hume D.A."/>
            <person name="Kai C."/>
            <person name="Sasaki D."/>
            <person name="Tomaru Y."/>
            <person name="Fukuda S."/>
            <person name="Kanamori-Katayama M."/>
            <person name="Suzuki M."/>
            <person name="Aoki J."/>
            <person name="Arakawa T."/>
            <person name="Iida J."/>
            <person name="Imamura K."/>
            <person name="Itoh M."/>
            <person name="Kato T."/>
            <person name="Kawaji H."/>
            <person name="Kawagashira N."/>
            <person name="Kawashima T."/>
            <person name="Kojima M."/>
            <person name="Kondo S."/>
            <person name="Konno H."/>
            <person name="Nakano K."/>
            <person name="Ninomiya N."/>
            <person name="Nishio T."/>
            <person name="Okada M."/>
            <person name="Plessy C."/>
            <person name="Shibata K."/>
            <person name="Shiraki T."/>
            <person name="Suzuki S."/>
            <person name="Tagami M."/>
            <person name="Waki K."/>
            <person name="Watahiki A."/>
            <person name="Okamura-Oho Y."/>
            <person name="Suzuki H."/>
            <person name="Kawai J."/>
            <person name="Hayashizaki Y."/>
        </authorList>
    </citation>
    <scope>NUCLEOTIDE SEQUENCE [LARGE SCALE MRNA]</scope>
    <source>
        <strain>C57BL/6J</strain>
        <tissue>Cerebellum</tissue>
        <tissue>Embryo</tissue>
        <tissue>Head</tissue>
        <tissue>Tongue</tissue>
    </source>
</reference>
<reference key="3">
    <citation type="journal article" date="2004" name="Genome Res.">
        <title>The status, quality, and expansion of the NIH full-length cDNA project: the Mammalian Gene Collection (MGC).</title>
        <authorList>
            <consortium name="The MGC Project Team"/>
        </authorList>
    </citation>
    <scope>NUCLEOTIDE SEQUENCE [LARGE SCALE MRNA]</scope>
    <source>
        <strain>FVB/N</strain>
        <tissue>Kidney</tissue>
    </source>
</reference>
<reference key="4">
    <citation type="journal article" date="2010" name="Cell">
        <title>A tissue-specific atlas of mouse protein phosphorylation and expression.</title>
        <authorList>
            <person name="Huttlin E.L."/>
            <person name="Jedrychowski M.P."/>
            <person name="Elias J.E."/>
            <person name="Goswami T."/>
            <person name="Rad R."/>
            <person name="Beausoleil S.A."/>
            <person name="Villen J."/>
            <person name="Haas W."/>
            <person name="Sowa M.E."/>
            <person name="Gygi S.P."/>
        </authorList>
    </citation>
    <scope>PHOSPHORYLATION [LARGE SCALE ANALYSIS] AT SER-59</scope>
    <scope>IDENTIFICATION BY MASS SPECTROMETRY [LARGE SCALE ANALYSIS]</scope>
    <source>
        <tissue>Brain</tissue>
    </source>
</reference>
<name>CNBP1_MOUSE</name>
<gene>
    <name type="primary">Ctnnbip1</name>
    <name type="synonym">Catnbip1</name>
    <name type="synonym">Icat</name>
</gene>
<organism>
    <name type="scientific">Mus musculus</name>
    <name type="common">Mouse</name>
    <dbReference type="NCBI Taxonomy" id="10090"/>
    <lineage>
        <taxon>Eukaryota</taxon>
        <taxon>Metazoa</taxon>
        <taxon>Chordata</taxon>
        <taxon>Craniata</taxon>
        <taxon>Vertebrata</taxon>
        <taxon>Euteleostomi</taxon>
        <taxon>Mammalia</taxon>
        <taxon>Eutheria</taxon>
        <taxon>Euarchontoglires</taxon>
        <taxon>Glires</taxon>
        <taxon>Rodentia</taxon>
        <taxon>Myomorpha</taxon>
        <taxon>Muroidea</taxon>
        <taxon>Muridae</taxon>
        <taxon>Murinae</taxon>
        <taxon>Mus</taxon>
        <taxon>Mus</taxon>
    </lineage>
</organism>
<evidence type="ECO:0000269" key="1">
    <source>
    </source>
</evidence>
<evidence type="ECO:0000305" key="2"/>
<evidence type="ECO:0007744" key="3">
    <source>
    </source>
</evidence>
<sequence length="81" mass="9174">MNREGAPGKSPEEMYIQQKVRVLLMLRKMGSNLTASEEEFLRTYAGVVSSQLSQLPQHSIDQGAEDVVMAFSRSETEDRRQ</sequence>
<feature type="chain" id="PRO_0000152883" description="Beta-catenin-interacting protein 1">
    <location>
        <begin position="1"/>
        <end position="81"/>
    </location>
</feature>
<feature type="modified residue" description="Phosphoserine" evidence="3">
    <location>
        <position position="59"/>
    </location>
</feature>
<feature type="mutagenesis site" description="Abolishes CTNNB1 binding." evidence="1">
    <original>EEE</original>
    <variation>AAA</variation>
    <location>
        <begin position="37"/>
        <end position="39"/>
    </location>
</feature>
<dbReference type="EMBL" id="AB021261">
    <property type="protein sequence ID" value="BAB03457.1"/>
    <property type="molecule type" value="mRNA"/>
</dbReference>
<dbReference type="EMBL" id="AK003595">
    <property type="protein sequence ID" value="BAB22883.1"/>
    <property type="molecule type" value="mRNA"/>
</dbReference>
<dbReference type="EMBL" id="AK009066">
    <property type="protein sequence ID" value="BAB26052.1"/>
    <property type="molecule type" value="mRNA"/>
</dbReference>
<dbReference type="EMBL" id="AK036181">
    <property type="protein sequence ID" value="BAC29336.1"/>
    <property type="molecule type" value="mRNA"/>
</dbReference>
<dbReference type="EMBL" id="AK048258">
    <property type="protein sequence ID" value="BAC33287.1"/>
    <property type="molecule type" value="mRNA"/>
</dbReference>
<dbReference type="EMBL" id="BC038253">
    <property type="protein sequence ID" value="AAH38253.1"/>
    <property type="molecule type" value="mRNA"/>
</dbReference>
<dbReference type="CCDS" id="CCDS38975.1"/>
<dbReference type="RefSeq" id="NP_001135402.1">
    <property type="nucleotide sequence ID" value="NM_001141930.1"/>
</dbReference>
<dbReference type="RefSeq" id="NP_075954.1">
    <property type="nucleotide sequence ID" value="NM_023465.4"/>
</dbReference>
<dbReference type="SMR" id="Q9JJN6"/>
<dbReference type="BioGRID" id="211930">
    <property type="interactions" value="3"/>
</dbReference>
<dbReference type="ComplexPortal" id="CPX-86">
    <property type="entry name" value="Beta-catenin-ICAT complex"/>
</dbReference>
<dbReference type="FunCoup" id="Q9JJN6">
    <property type="interactions" value="902"/>
</dbReference>
<dbReference type="MINT" id="Q9JJN6"/>
<dbReference type="STRING" id="10090.ENSMUSP00000030839"/>
<dbReference type="iPTMnet" id="Q9JJN6"/>
<dbReference type="PhosphoSitePlus" id="Q9JJN6"/>
<dbReference type="PaxDb" id="10090-ENSMUSP00000030839"/>
<dbReference type="PeptideAtlas" id="Q9JJN6"/>
<dbReference type="ProteomicsDB" id="283392"/>
<dbReference type="Pumba" id="Q9JJN6"/>
<dbReference type="Antibodypedia" id="27763">
    <property type="antibodies" value="184 antibodies from 24 providers"/>
</dbReference>
<dbReference type="DNASU" id="67087"/>
<dbReference type="Ensembl" id="ENSMUST00000030839.13">
    <property type="protein sequence ID" value="ENSMUSP00000030839.7"/>
    <property type="gene ID" value="ENSMUSG00000028988.14"/>
</dbReference>
<dbReference type="Ensembl" id="ENSMUST00000105692.2">
    <property type="protein sequence ID" value="ENSMUSP00000101317.2"/>
    <property type="gene ID" value="ENSMUSG00000028988.14"/>
</dbReference>
<dbReference type="GeneID" id="67087"/>
<dbReference type="KEGG" id="mmu:67087"/>
<dbReference type="UCSC" id="uc008vwm.2">
    <property type="organism name" value="mouse"/>
</dbReference>
<dbReference type="AGR" id="MGI:1915756"/>
<dbReference type="CTD" id="56998"/>
<dbReference type="MGI" id="MGI:1915756">
    <property type="gene designation" value="Ctnnbip1"/>
</dbReference>
<dbReference type="VEuPathDB" id="HostDB:ENSMUSG00000028988"/>
<dbReference type="eggNOG" id="ENOG502S3XR">
    <property type="taxonomic scope" value="Eukaryota"/>
</dbReference>
<dbReference type="GeneTree" id="ENSGT00940000161133"/>
<dbReference type="HOGENOM" id="CLU_145119_1_0_1"/>
<dbReference type="InParanoid" id="Q9JJN6"/>
<dbReference type="OMA" id="MNCEGAS"/>
<dbReference type="OrthoDB" id="9926449at2759"/>
<dbReference type="PhylomeDB" id="Q9JJN6"/>
<dbReference type="Reactome" id="R-MMU-3769402">
    <property type="pathway name" value="Deactivation of the beta-catenin transactivating complex"/>
</dbReference>
<dbReference type="BioGRID-ORCS" id="67087">
    <property type="hits" value="3 hits in 79 CRISPR screens"/>
</dbReference>
<dbReference type="ChiTaRS" id="Ctnnbip1">
    <property type="organism name" value="mouse"/>
</dbReference>
<dbReference type="EvolutionaryTrace" id="Q9JJN6"/>
<dbReference type="PRO" id="PR:Q9JJN6"/>
<dbReference type="Proteomes" id="UP000000589">
    <property type="component" value="Chromosome 4"/>
</dbReference>
<dbReference type="RNAct" id="Q9JJN6">
    <property type="molecule type" value="protein"/>
</dbReference>
<dbReference type="Bgee" id="ENSMUSG00000028988">
    <property type="expression patterns" value="Expressed in tail skin and 251 other cell types or tissues"/>
</dbReference>
<dbReference type="GO" id="GO:0030877">
    <property type="term" value="C:beta-catenin destruction complex"/>
    <property type="evidence" value="ECO:0007669"/>
    <property type="project" value="Ensembl"/>
</dbReference>
<dbReference type="GO" id="GO:1990711">
    <property type="term" value="C:beta-catenin-ICAT complex"/>
    <property type="evidence" value="ECO:0000353"/>
    <property type="project" value="ComplexPortal"/>
</dbReference>
<dbReference type="GO" id="GO:0005737">
    <property type="term" value="C:cytoplasm"/>
    <property type="evidence" value="ECO:0000304"/>
    <property type="project" value="MGI"/>
</dbReference>
<dbReference type="GO" id="GO:0005829">
    <property type="term" value="C:cytosol"/>
    <property type="evidence" value="ECO:0007669"/>
    <property type="project" value="Ensembl"/>
</dbReference>
<dbReference type="GO" id="GO:0005634">
    <property type="term" value="C:nucleus"/>
    <property type="evidence" value="ECO:0000304"/>
    <property type="project" value="MGI"/>
</dbReference>
<dbReference type="GO" id="GO:0070016">
    <property type="term" value="F:armadillo repeat domain binding"/>
    <property type="evidence" value="ECO:0007669"/>
    <property type="project" value="Ensembl"/>
</dbReference>
<dbReference type="GO" id="GO:0008013">
    <property type="term" value="F:beta-catenin binding"/>
    <property type="evidence" value="ECO:0000353"/>
    <property type="project" value="MGI"/>
</dbReference>
<dbReference type="GO" id="GO:0001223">
    <property type="term" value="F:transcription coactivator binding"/>
    <property type="evidence" value="ECO:0000250"/>
    <property type="project" value="BHF-UCL"/>
</dbReference>
<dbReference type="GO" id="GO:0140416">
    <property type="term" value="F:transcription regulator inhibitor activity"/>
    <property type="evidence" value="ECO:0000250"/>
    <property type="project" value="BHF-UCL"/>
</dbReference>
<dbReference type="GO" id="GO:0009952">
    <property type="term" value="P:anterior/posterior pattern specification"/>
    <property type="evidence" value="ECO:0000315"/>
    <property type="project" value="MGI"/>
</dbReference>
<dbReference type="GO" id="GO:0001658">
    <property type="term" value="P:branching involved in ureteric bud morphogenesis"/>
    <property type="evidence" value="ECO:0000315"/>
    <property type="project" value="MGI"/>
</dbReference>
<dbReference type="GO" id="GO:0090090">
    <property type="term" value="P:negative regulation of canonical Wnt signaling pathway"/>
    <property type="evidence" value="ECO:0000314"/>
    <property type="project" value="ComplexPortal"/>
</dbReference>
<dbReference type="GO" id="GO:0072201">
    <property type="term" value="P:negative regulation of mesenchymal cell proliferation"/>
    <property type="evidence" value="ECO:0007669"/>
    <property type="project" value="Ensembl"/>
</dbReference>
<dbReference type="GO" id="GO:0031333">
    <property type="term" value="P:negative regulation of protein-containing complex assembly"/>
    <property type="evidence" value="ECO:0000250"/>
    <property type="project" value="BHF-UCL"/>
</dbReference>
<dbReference type="GO" id="GO:0048662">
    <property type="term" value="P:negative regulation of smooth muscle cell proliferation"/>
    <property type="evidence" value="ECO:0000315"/>
    <property type="project" value="BHF-UCL"/>
</dbReference>
<dbReference type="GO" id="GO:0000122">
    <property type="term" value="P:negative regulation of transcription by RNA polymerase II"/>
    <property type="evidence" value="ECO:0000314"/>
    <property type="project" value="ComplexPortal"/>
</dbReference>
<dbReference type="GO" id="GO:0060633">
    <property type="term" value="P:negative regulation of transcription initiation by RNA polymerase II"/>
    <property type="evidence" value="ECO:0000250"/>
    <property type="project" value="BHF-UCL"/>
</dbReference>
<dbReference type="GO" id="GO:0030178">
    <property type="term" value="P:negative regulation of Wnt signaling pathway"/>
    <property type="evidence" value="ECO:0000314"/>
    <property type="project" value="MGI"/>
</dbReference>
<dbReference type="GO" id="GO:0045657">
    <property type="term" value="P:positive regulation of monocyte differentiation"/>
    <property type="evidence" value="ECO:0007669"/>
    <property type="project" value="Ensembl"/>
</dbReference>
<dbReference type="GO" id="GO:0045669">
    <property type="term" value="P:positive regulation of osteoblast differentiation"/>
    <property type="evidence" value="ECO:0007669"/>
    <property type="project" value="Ensembl"/>
</dbReference>
<dbReference type="GO" id="GO:0002528">
    <property type="term" value="P:regulation of vascular permeability involved in acute inflammatory response"/>
    <property type="evidence" value="ECO:0007669"/>
    <property type="project" value="Ensembl"/>
</dbReference>
<dbReference type="GO" id="GO:0016055">
    <property type="term" value="P:Wnt signaling pathway"/>
    <property type="evidence" value="ECO:0007669"/>
    <property type="project" value="UniProtKB-KW"/>
</dbReference>
<dbReference type="FunFam" id="1.10.10.490:FF:000001">
    <property type="entry name" value="beta-catenin-interacting protein 1"/>
    <property type="match status" value="1"/>
</dbReference>
<dbReference type="Gene3D" id="1.10.10.490">
    <property type="entry name" value="Beta-catenin-interacting ICAT"/>
    <property type="match status" value="1"/>
</dbReference>
<dbReference type="InterPro" id="IPR009428">
    <property type="entry name" value="ICAT_dom"/>
</dbReference>
<dbReference type="InterPro" id="IPR036911">
    <property type="entry name" value="ICAT_sf"/>
</dbReference>
<dbReference type="PANTHER" id="PTHR47142">
    <property type="entry name" value="BETA-CATENIN-INTERACTING PROTEIN 1"/>
    <property type="match status" value="1"/>
</dbReference>
<dbReference type="PANTHER" id="PTHR47142:SF1">
    <property type="entry name" value="BETA-CATENIN-INTERACTING PROTEIN 1"/>
    <property type="match status" value="1"/>
</dbReference>
<dbReference type="Pfam" id="PF06384">
    <property type="entry name" value="ICAT"/>
    <property type="match status" value="1"/>
</dbReference>
<dbReference type="SUPFAM" id="SSF81730">
    <property type="entry name" value="beta-catenin-interacting protein ICAT"/>
    <property type="match status" value="1"/>
</dbReference>
<keyword id="KW-0963">Cytoplasm</keyword>
<keyword id="KW-0539">Nucleus</keyword>
<keyword id="KW-0597">Phosphoprotein</keyword>
<keyword id="KW-1185">Reference proteome</keyword>
<keyword id="KW-0879">Wnt signaling pathway</keyword>
<proteinExistence type="evidence at protein level"/>
<comment type="function">
    <text>Prevents the interaction between CTNNB1 and TCF family members, and acts as a negative regulator of the Wnt signaling pathway.</text>
</comment>
<comment type="subunit">
    <text>Binds CTNNB1.</text>
</comment>
<comment type="subcellular location">
    <subcellularLocation>
        <location>Cytoplasm</location>
    </subcellularLocation>
    <subcellularLocation>
        <location>Nucleus</location>
    </subcellularLocation>
</comment>
<comment type="tissue specificity">
    <text>Highly expressed in heart, brain, liver and skeletal muscle. Detected at low levels in kidney, testis and lung.</text>
</comment>
<comment type="similarity">
    <text evidence="2">Belongs to the CTNNBIP1 family.</text>
</comment>